<gene>
    <name type="primary">FLT1</name>
    <name type="synonym">VEGFR1</name>
</gene>
<accession>Q8QHL3</accession>
<accession>Q8QHL2</accession>
<dbReference type="EC" id="2.7.10.1"/>
<dbReference type="EMBL" id="AB065372">
    <property type="protein sequence ID" value="BAB84690.1"/>
    <property type="molecule type" value="mRNA"/>
</dbReference>
<dbReference type="EMBL" id="AB065373">
    <property type="protein sequence ID" value="BAB84691.1"/>
    <property type="molecule type" value="mRNA"/>
</dbReference>
<dbReference type="RefSeq" id="NP_989583.1">
    <property type="nucleotide sequence ID" value="NM_204252.1"/>
</dbReference>
<dbReference type="SMR" id="Q8QHL3"/>
<dbReference type="FunCoup" id="Q8QHL3">
    <property type="interactions" value="314"/>
</dbReference>
<dbReference type="STRING" id="9031.ENSGALP00000027556"/>
<dbReference type="GlyCosmos" id="Q8QHL3">
    <property type="glycosylation" value="17 sites, No reported glycans"/>
</dbReference>
<dbReference type="GlyGen" id="Q8QHL3">
    <property type="glycosylation" value="17 sites"/>
</dbReference>
<dbReference type="PaxDb" id="9031-ENSGALP00000027556"/>
<dbReference type="GeneID" id="374100"/>
<dbReference type="KEGG" id="gga:374100"/>
<dbReference type="CTD" id="2321"/>
<dbReference type="VEuPathDB" id="HostDB:geneid_374100"/>
<dbReference type="eggNOG" id="KOG0200">
    <property type="taxonomic scope" value="Eukaryota"/>
</dbReference>
<dbReference type="InParanoid" id="Q8QHL3"/>
<dbReference type="OrthoDB" id="10059496at2759"/>
<dbReference type="PhylomeDB" id="Q8QHL3"/>
<dbReference type="PRO" id="PR:Q8QHL3"/>
<dbReference type="Proteomes" id="UP000000539">
    <property type="component" value="Unassembled WGS sequence"/>
</dbReference>
<dbReference type="GO" id="GO:0005768">
    <property type="term" value="C:endosome"/>
    <property type="evidence" value="ECO:0007669"/>
    <property type="project" value="UniProtKB-SubCell"/>
</dbReference>
<dbReference type="GO" id="GO:0005576">
    <property type="term" value="C:extracellular region"/>
    <property type="evidence" value="ECO:0007669"/>
    <property type="project" value="UniProtKB-SubCell"/>
</dbReference>
<dbReference type="GO" id="GO:0005886">
    <property type="term" value="C:plasma membrane"/>
    <property type="evidence" value="ECO:0000318"/>
    <property type="project" value="GO_Central"/>
</dbReference>
<dbReference type="GO" id="GO:0043235">
    <property type="term" value="C:receptor complex"/>
    <property type="evidence" value="ECO:0000318"/>
    <property type="project" value="GO_Central"/>
</dbReference>
<dbReference type="GO" id="GO:0005524">
    <property type="term" value="F:ATP binding"/>
    <property type="evidence" value="ECO:0007669"/>
    <property type="project" value="UniProtKB-KW"/>
</dbReference>
<dbReference type="GO" id="GO:0019838">
    <property type="term" value="F:growth factor binding"/>
    <property type="evidence" value="ECO:0000318"/>
    <property type="project" value="GO_Central"/>
</dbReference>
<dbReference type="GO" id="GO:0005021">
    <property type="term" value="F:vascular endothelial growth factor receptor activity"/>
    <property type="evidence" value="ECO:0000318"/>
    <property type="project" value="GO_Central"/>
</dbReference>
<dbReference type="GO" id="GO:0030154">
    <property type="term" value="P:cell differentiation"/>
    <property type="evidence" value="ECO:0007669"/>
    <property type="project" value="UniProtKB-KW"/>
</dbReference>
<dbReference type="GO" id="GO:0016477">
    <property type="term" value="P:cell migration"/>
    <property type="evidence" value="ECO:0000318"/>
    <property type="project" value="GO_Central"/>
</dbReference>
<dbReference type="GO" id="GO:0006935">
    <property type="term" value="P:chemotaxis"/>
    <property type="evidence" value="ECO:0007669"/>
    <property type="project" value="UniProtKB-KW"/>
</dbReference>
<dbReference type="GO" id="GO:0030335">
    <property type="term" value="P:positive regulation of cell migration"/>
    <property type="evidence" value="ECO:0000318"/>
    <property type="project" value="GO_Central"/>
</dbReference>
<dbReference type="GO" id="GO:0008284">
    <property type="term" value="P:positive regulation of cell population proliferation"/>
    <property type="evidence" value="ECO:0000318"/>
    <property type="project" value="GO_Central"/>
</dbReference>
<dbReference type="GO" id="GO:0043410">
    <property type="term" value="P:positive regulation of MAPK cascade"/>
    <property type="evidence" value="ECO:0000318"/>
    <property type="project" value="GO_Central"/>
</dbReference>
<dbReference type="GO" id="GO:0002040">
    <property type="term" value="P:sprouting angiogenesis"/>
    <property type="evidence" value="ECO:0000318"/>
    <property type="project" value="GO_Central"/>
</dbReference>
<dbReference type="GO" id="GO:0048010">
    <property type="term" value="P:vascular endothelial growth factor receptor signaling pathway"/>
    <property type="evidence" value="ECO:0000318"/>
    <property type="project" value="GO_Central"/>
</dbReference>
<dbReference type="CDD" id="cd00096">
    <property type="entry name" value="Ig"/>
    <property type="match status" value="1"/>
</dbReference>
<dbReference type="FunFam" id="2.60.40.10:FF:000606">
    <property type="entry name" value="Vascular endothelial growth factor receptor 1"/>
    <property type="match status" value="1"/>
</dbReference>
<dbReference type="FunFam" id="2.60.40.10:FF:001031">
    <property type="entry name" value="Vascular endothelial growth factor receptor 1"/>
    <property type="match status" value="1"/>
</dbReference>
<dbReference type="FunFam" id="2.60.40.10:FF:001347">
    <property type="entry name" value="Vascular endothelial growth factor receptor 1"/>
    <property type="match status" value="1"/>
</dbReference>
<dbReference type="FunFam" id="2.60.40.10:FF:000934">
    <property type="entry name" value="vascular endothelial growth factor receptor 1"/>
    <property type="match status" value="1"/>
</dbReference>
<dbReference type="FunFam" id="2.60.40.10:FF:001014">
    <property type="entry name" value="vascular endothelial growth factor receptor 1"/>
    <property type="match status" value="1"/>
</dbReference>
<dbReference type="FunFam" id="1.10.510.10:FF:000077">
    <property type="entry name" value="Vascular endothelial growth factor receptor 2"/>
    <property type="match status" value="1"/>
</dbReference>
<dbReference type="FunFam" id="3.30.200.20:FF:000041">
    <property type="entry name" value="Vascular endothelial growth factor receptor 2"/>
    <property type="match status" value="1"/>
</dbReference>
<dbReference type="FunFam" id="2.60.40.10:FF:000143">
    <property type="entry name" value="Vascular endothelial growth factor receptor 3"/>
    <property type="match status" value="1"/>
</dbReference>
<dbReference type="Gene3D" id="2.60.40.10">
    <property type="entry name" value="Immunoglobulins"/>
    <property type="match status" value="7"/>
</dbReference>
<dbReference type="Gene3D" id="3.30.200.20">
    <property type="entry name" value="Phosphorylase Kinase, domain 1"/>
    <property type="match status" value="1"/>
</dbReference>
<dbReference type="Gene3D" id="1.10.510.10">
    <property type="entry name" value="Transferase(Phosphotransferase) domain 1"/>
    <property type="match status" value="1"/>
</dbReference>
<dbReference type="InterPro" id="IPR007110">
    <property type="entry name" value="Ig-like_dom"/>
</dbReference>
<dbReference type="InterPro" id="IPR036179">
    <property type="entry name" value="Ig-like_dom_sf"/>
</dbReference>
<dbReference type="InterPro" id="IPR013783">
    <property type="entry name" value="Ig-like_fold"/>
</dbReference>
<dbReference type="InterPro" id="IPR013098">
    <property type="entry name" value="Ig_I-set"/>
</dbReference>
<dbReference type="InterPro" id="IPR003599">
    <property type="entry name" value="Ig_sub"/>
</dbReference>
<dbReference type="InterPro" id="IPR003598">
    <property type="entry name" value="Ig_sub2"/>
</dbReference>
<dbReference type="InterPro" id="IPR013151">
    <property type="entry name" value="Immunoglobulin_dom"/>
</dbReference>
<dbReference type="InterPro" id="IPR011009">
    <property type="entry name" value="Kinase-like_dom_sf"/>
</dbReference>
<dbReference type="InterPro" id="IPR000719">
    <property type="entry name" value="Prot_kinase_dom"/>
</dbReference>
<dbReference type="InterPro" id="IPR017441">
    <property type="entry name" value="Protein_kinase_ATP_BS"/>
</dbReference>
<dbReference type="InterPro" id="IPR050122">
    <property type="entry name" value="RTK"/>
</dbReference>
<dbReference type="InterPro" id="IPR001245">
    <property type="entry name" value="Ser-Thr/Tyr_kinase_cat_dom"/>
</dbReference>
<dbReference type="InterPro" id="IPR008266">
    <property type="entry name" value="Tyr_kinase_AS"/>
</dbReference>
<dbReference type="InterPro" id="IPR020635">
    <property type="entry name" value="Tyr_kinase_cat_dom"/>
</dbReference>
<dbReference type="InterPro" id="IPR001824">
    <property type="entry name" value="Tyr_kinase_rcpt_3_CS"/>
</dbReference>
<dbReference type="InterPro" id="IPR041348">
    <property type="entry name" value="VEGFR-2_TMD"/>
</dbReference>
<dbReference type="InterPro" id="IPR055229">
    <property type="entry name" value="VEGFR1-3_5th"/>
</dbReference>
<dbReference type="InterPro" id="IPR055238">
    <property type="entry name" value="VEGFR1-3_N_Ig-like"/>
</dbReference>
<dbReference type="InterPro" id="IPR009135">
    <property type="entry name" value="VEGFR1_rcpt"/>
</dbReference>
<dbReference type="PANTHER" id="PTHR24416">
    <property type="entry name" value="TYROSINE-PROTEIN KINASE RECEPTOR"/>
    <property type="match status" value="1"/>
</dbReference>
<dbReference type="PANTHER" id="PTHR24416:SF390">
    <property type="entry name" value="VASCULAR ENDOTHELIAL GROWTH FACTOR RECEPTOR 1"/>
    <property type="match status" value="1"/>
</dbReference>
<dbReference type="Pfam" id="PF07679">
    <property type="entry name" value="I-set"/>
    <property type="match status" value="2"/>
</dbReference>
<dbReference type="Pfam" id="PF00047">
    <property type="entry name" value="ig"/>
    <property type="match status" value="1"/>
</dbReference>
<dbReference type="Pfam" id="PF13927">
    <property type="entry name" value="Ig_3"/>
    <property type="match status" value="1"/>
</dbReference>
<dbReference type="Pfam" id="PF22971">
    <property type="entry name" value="Ig_VEGFR-1-like_5th"/>
    <property type="match status" value="1"/>
</dbReference>
<dbReference type="Pfam" id="PF07714">
    <property type="entry name" value="PK_Tyr_Ser-Thr"/>
    <property type="match status" value="1"/>
</dbReference>
<dbReference type="Pfam" id="PF21339">
    <property type="entry name" value="VEGFR-1-like_Ig-like"/>
    <property type="match status" value="1"/>
</dbReference>
<dbReference type="Pfam" id="PF17988">
    <property type="entry name" value="VEGFR-2_TMD"/>
    <property type="match status" value="1"/>
</dbReference>
<dbReference type="Pfam" id="PF22854">
    <property type="entry name" value="VEGFR1-3_N_Ig-like"/>
    <property type="match status" value="1"/>
</dbReference>
<dbReference type="PIRSF" id="PIRSF000615">
    <property type="entry name" value="TyrPK_CSF1-R"/>
    <property type="match status" value="1"/>
</dbReference>
<dbReference type="PRINTS" id="PR01832">
    <property type="entry name" value="VEGFRECEPTOR"/>
</dbReference>
<dbReference type="PRINTS" id="PR01833">
    <property type="entry name" value="VEGFRECEPTR1"/>
</dbReference>
<dbReference type="SMART" id="SM00409">
    <property type="entry name" value="IG"/>
    <property type="match status" value="7"/>
</dbReference>
<dbReference type="SMART" id="SM00408">
    <property type="entry name" value="IGc2"/>
    <property type="match status" value="5"/>
</dbReference>
<dbReference type="SMART" id="SM00219">
    <property type="entry name" value="TyrKc"/>
    <property type="match status" value="1"/>
</dbReference>
<dbReference type="SUPFAM" id="SSF48726">
    <property type="entry name" value="Immunoglobulin"/>
    <property type="match status" value="7"/>
</dbReference>
<dbReference type="SUPFAM" id="SSF56112">
    <property type="entry name" value="Protein kinase-like (PK-like)"/>
    <property type="match status" value="1"/>
</dbReference>
<dbReference type="PROSITE" id="PS50835">
    <property type="entry name" value="IG_LIKE"/>
    <property type="match status" value="6"/>
</dbReference>
<dbReference type="PROSITE" id="PS00107">
    <property type="entry name" value="PROTEIN_KINASE_ATP"/>
    <property type="match status" value="1"/>
</dbReference>
<dbReference type="PROSITE" id="PS50011">
    <property type="entry name" value="PROTEIN_KINASE_DOM"/>
    <property type="match status" value="1"/>
</dbReference>
<dbReference type="PROSITE" id="PS00109">
    <property type="entry name" value="PROTEIN_KINASE_TYR"/>
    <property type="match status" value="1"/>
</dbReference>
<dbReference type="PROSITE" id="PS00240">
    <property type="entry name" value="RECEPTOR_TYR_KIN_III"/>
    <property type="match status" value="1"/>
</dbReference>
<evidence type="ECO:0000250" key="1"/>
<evidence type="ECO:0000250" key="2">
    <source>
        <dbReference type="UniProtKB" id="P17948"/>
    </source>
</evidence>
<evidence type="ECO:0000250" key="3">
    <source>
        <dbReference type="UniProtKB" id="P35969"/>
    </source>
</evidence>
<evidence type="ECO:0000255" key="4"/>
<evidence type="ECO:0000255" key="5">
    <source>
        <dbReference type="PROSITE-ProRule" id="PRU00114"/>
    </source>
</evidence>
<evidence type="ECO:0000255" key="6">
    <source>
        <dbReference type="PROSITE-ProRule" id="PRU00159"/>
    </source>
</evidence>
<evidence type="ECO:0000255" key="7">
    <source>
        <dbReference type="PROSITE-ProRule" id="PRU10028"/>
    </source>
</evidence>
<evidence type="ECO:0000256" key="8">
    <source>
        <dbReference type="SAM" id="MobiDB-lite"/>
    </source>
</evidence>
<evidence type="ECO:0000303" key="9">
    <source>
    </source>
</evidence>
<name>VGFR1_CHICK</name>
<proteinExistence type="evidence at transcript level"/>
<feature type="signal peptide" evidence="4">
    <location>
        <begin position="1"/>
        <end position="24"/>
    </location>
</feature>
<feature type="chain" id="PRO_0000249462" description="Vascular endothelial growth factor receptor 1">
    <location>
        <begin position="25"/>
        <end position="1327"/>
    </location>
</feature>
<feature type="topological domain" description="Extracellular" evidence="4">
    <location>
        <begin position="25"/>
        <end position="749"/>
    </location>
</feature>
<feature type="transmembrane region" description="Helical" evidence="4">
    <location>
        <begin position="750"/>
        <end position="770"/>
    </location>
</feature>
<feature type="topological domain" description="Cytoplasmic" evidence="4">
    <location>
        <begin position="771"/>
        <end position="1327"/>
    </location>
</feature>
<feature type="domain" description="Ig-like C2-type 1">
    <location>
        <begin position="30"/>
        <end position="121"/>
    </location>
</feature>
<feature type="domain" description="Ig-like C2-type 2">
    <location>
        <begin position="120"/>
        <end position="222"/>
    </location>
</feature>
<feature type="domain" description="Ig-like C2-type 3">
    <location>
        <begin position="227"/>
        <end position="323"/>
    </location>
</feature>
<feature type="domain" description="Ig-like C2-type 4">
    <location>
        <begin position="331"/>
        <end position="417"/>
    </location>
</feature>
<feature type="domain" description="Ig-like C2-type 5">
    <location>
        <begin position="424"/>
        <end position="545"/>
    </location>
</feature>
<feature type="domain" description="Ig-like C2-type 6">
    <location>
        <begin position="552"/>
        <end position="644"/>
    </location>
</feature>
<feature type="domain" description="Ig-like C2-type 7">
    <location>
        <begin position="651"/>
        <end position="737"/>
    </location>
</feature>
<feature type="domain" description="Protein kinase" evidence="6">
    <location>
        <begin position="819"/>
        <end position="1151"/>
    </location>
</feature>
<feature type="region of interest" description="Disordered" evidence="8">
    <location>
        <begin position="950"/>
        <end position="971"/>
    </location>
</feature>
<feature type="compositionally biased region" description="Low complexity" evidence="8">
    <location>
        <begin position="951"/>
        <end position="961"/>
    </location>
</feature>
<feature type="active site" description="Proton acceptor" evidence="6 7">
    <location>
        <position position="1015"/>
    </location>
</feature>
<feature type="binding site" evidence="6">
    <location>
        <begin position="825"/>
        <end position="833"/>
    </location>
    <ligand>
        <name>ATP</name>
        <dbReference type="ChEBI" id="CHEBI:30616"/>
    </ligand>
</feature>
<feature type="binding site" evidence="6">
    <location>
        <position position="853"/>
    </location>
    <ligand>
        <name>ATP</name>
        <dbReference type="ChEBI" id="CHEBI:30616"/>
    </ligand>
</feature>
<feature type="modified residue" description="Phosphotyrosine; by autocatalysis" evidence="1">
    <location>
        <position position="1046"/>
    </location>
</feature>
<feature type="modified residue" description="Phosphotyrosine; by autocatalysis" evidence="1">
    <location>
        <position position="1162"/>
    </location>
</feature>
<feature type="modified residue" description="Phosphotyrosine; by autocatalysis" evidence="1">
    <location>
        <position position="1202"/>
    </location>
</feature>
<feature type="modified residue" description="Phosphotyrosine; by autocatalysis" evidence="1">
    <location>
        <position position="1231"/>
    </location>
</feature>
<feature type="modified residue" description="Phosphotyrosine; by autocatalysis" evidence="1">
    <location>
        <position position="1316"/>
    </location>
</feature>
<feature type="modified residue" description="Phosphotyrosine; by autocatalysis" evidence="1">
    <location>
        <position position="1322"/>
    </location>
</feature>
<feature type="glycosylation site" description="N-linked (GlcNAc...) asparagine" evidence="4">
    <location>
        <position position="48"/>
    </location>
</feature>
<feature type="glycosylation site" description="N-linked (GlcNAc...) asparagine" evidence="4">
    <location>
        <position position="73"/>
    </location>
</feature>
<feature type="glycosylation site" description="N-linked (GlcNAc...) asparagine" evidence="4">
    <location>
        <position position="82"/>
    </location>
</feature>
<feature type="glycosylation site" description="N-linked (GlcNAc...) asparagine" evidence="4">
    <location>
        <position position="98"/>
    </location>
</feature>
<feature type="glycosylation site" description="N-linked (GlcNAc...) asparagine" evidence="4">
    <location>
        <position position="125"/>
    </location>
</feature>
<feature type="glycosylation site" description="N-linked (GlcNAc...) asparagine" evidence="4">
    <location>
        <position position="247"/>
    </location>
</feature>
<feature type="glycosylation site" description="N-linked (GlcNAc...) asparagine" evidence="4">
    <location>
        <position position="319"/>
    </location>
</feature>
<feature type="glycosylation site" description="N-linked (GlcNAc...) asparagine" evidence="4">
    <location>
        <position position="383"/>
    </location>
</feature>
<feature type="glycosylation site" description="N-linked (GlcNAc...) asparagine" evidence="4">
    <location>
        <position position="398"/>
    </location>
</feature>
<feature type="glycosylation site" description="N-linked (GlcNAc...) asparagine" evidence="4">
    <location>
        <position position="409"/>
    </location>
</feature>
<feature type="glycosylation site" description="N-linked (GlcNAc...) asparagine" evidence="4">
    <location>
        <position position="413"/>
    </location>
</feature>
<feature type="glycosylation site" description="N-linked (GlcNAc...) asparagine" evidence="4">
    <location>
        <position position="470"/>
    </location>
</feature>
<feature type="glycosylation site" description="N-linked (GlcNAc...) asparagine" evidence="4">
    <location>
        <position position="512"/>
    </location>
</feature>
<feature type="glycosylation site" description="N-linked (GlcNAc...) asparagine" evidence="4">
    <location>
        <position position="543"/>
    </location>
</feature>
<feature type="glycosylation site" description="N-linked (GlcNAc...) asparagine" evidence="4">
    <location>
        <position position="593"/>
    </location>
</feature>
<feature type="glycosylation site" description="N-linked (GlcNAc...) asparagine" evidence="4">
    <location>
        <position position="615"/>
    </location>
</feature>
<feature type="glycosylation site" description="N-linked (GlcNAc...) asparagine" evidence="4">
    <location>
        <position position="663"/>
    </location>
</feature>
<feature type="disulfide bond" evidence="5">
    <location>
        <begin position="51"/>
        <end position="105"/>
    </location>
</feature>
<feature type="disulfide bond" evidence="5">
    <location>
        <begin position="154"/>
        <end position="203"/>
    </location>
</feature>
<feature type="disulfide bond" evidence="5">
    <location>
        <begin position="248"/>
        <end position="307"/>
    </location>
</feature>
<feature type="disulfide bond" evidence="5">
    <location>
        <begin position="450"/>
        <end position="531"/>
    </location>
</feature>
<feature type="disulfide bond" evidence="5">
    <location>
        <begin position="573"/>
        <end position="626"/>
    </location>
</feature>
<feature type="disulfide bond" evidence="5">
    <location>
        <begin position="672"/>
        <end position="721"/>
    </location>
</feature>
<feature type="splice variant" id="VSP_020427" description="In isoform 2." evidence="9">
    <original>AQEAPALLRQLMDQTVNTSNSAMLECQVHGI</original>
    <variation>GEHCNKKAVYSRILKYKNTRNDCTTQSNVKH</variation>
    <location>
        <begin position="647"/>
        <end position="677"/>
    </location>
</feature>
<feature type="splice variant" id="VSP_027160" description="In isoform 2." evidence="9">
    <location>
        <begin position="678"/>
        <end position="1327"/>
    </location>
</feature>
<comment type="function">
    <text evidence="2 3">Tyrosine-protein kinase that acts as a cell-surface receptor for VEGFA, VEGFB and PGF, and plays an essential role in the regulation of angiogenesis, cell survival, cell migration, macrophage function, and chemotaxis. Acts as a positive regulator of postnatal retinal hyaloid vessel regression (By similarity). Has very high affinity for VEGFA and relatively low protein kinase activity; may function as a negative regulator of VEGFA signaling by limiting the amount of free VEGFA and preventing its binding to KDR. Ligand binding leads to the activation of several signaling cascades. Activation of PLCG1 leads to the production of the cellular signaling molecules diacylglycerol and inositol 1,4,5-trisphosphate and the activation of protein kinase C. Mediates phosphorylation of PIK3R1, the regulatory subunit of phosphatidylinositol 3-kinase, leading to activation of phosphatidylinositol kinase and the downstream signaling pathway. Mediates activation of MAPK1/ERK2, MAPK3/ERK1 and the MAP kinase signaling pathway, as well as of the AKT1 signaling pathway. Phosphorylates PLCG1. Promotes phosphorylation of AKT1 and CBL (By similarity).</text>
</comment>
<comment type="catalytic activity">
    <reaction evidence="7">
        <text>L-tyrosyl-[protein] + ATP = O-phospho-L-tyrosyl-[protein] + ADP + H(+)</text>
        <dbReference type="Rhea" id="RHEA:10596"/>
        <dbReference type="Rhea" id="RHEA-COMP:10136"/>
        <dbReference type="Rhea" id="RHEA-COMP:20101"/>
        <dbReference type="ChEBI" id="CHEBI:15378"/>
        <dbReference type="ChEBI" id="CHEBI:30616"/>
        <dbReference type="ChEBI" id="CHEBI:46858"/>
        <dbReference type="ChEBI" id="CHEBI:61978"/>
        <dbReference type="ChEBI" id="CHEBI:456216"/>
        <dbReference type="EC" id="2.7.10.1"/>
    </reaction>
</comment>
<comment type="activity regulation">
    <text evidence="1">Present in an inactive conformation in the absence of bound ligand. Binding of VEGFA, VEGFB or PGF leads to dimerization and activation by autophosphorylation on tyrosine residues (By similarity).</text>
</comment>
<comment type="subunit">
    <text evidence="1">Interacts with VEGFA, VEGFB and PGF. Monomer in the absence of bound VEGFA, VEGFB or PGF. Homodimer in the presence of bound VEGFA, VEGFB and PGF (By similarity).</text>
</comment>
<comment type="subcellular location">
    <molecule>Isoform 1</molecule>
    <subcellularLocation>
        <location>Cell membrane</location>
        <topology>Single-pass type I membrane protein</topology>
    </subcellularLocation>
    <subcellularLocation>
        <location evidence="1">Endosome</location>
    </subcellularLocation>
    <text evidence="1">Autophosphorylation promotes internalization and degradation.</text>
</comment>
<comment type="subcellular location">
    <molecule>Isoform 2</molecule>
    <subcellularLocation>
        <location>Secreted</location>
    </subcellularLocation>
</comment>
<comment type="alternative products">
    <event type="alternative splicing"/>
    <isoform>
        <id>Q8QHL3-1</id>
        <name>1</name>
        <name>Flt1</name>
        <sequence type="displayed"/>
    </isoform>
    <isoform>
        <id>Q8QHL3-2</id>
        <name>2</name>
        <name>sFlt1</name>
        <sequence type="described" ref="VSP_020427 VSP_027160"/>
    </isoform>
</comment>
<comment type="PTM">
    <text evidence="1">Autophosphorylated on tyrosine residues upon ligand binding.</text>
</comment>
<comment type="similarity">
    <text evidence="6">Belongs to the protein kinase superfamily. Tyr protein kinase family. CSF-1/PDGF receptor subfamily.</text>
</comment>
<organism>
    <name type="scientific">Gallus gallus</name>
    <name type="common">Chicken</name>
    <dbReference type="NCBI Taxonomy" id="9031"/>
    <lineage>
        <taxon>Eukaryota</taxon>
        <taxon>Metazoa</taxon>
        <taxon>Chordata</taxon>
        <taxon>Craniata</taxon>
        <taxon>Vertebrata</taxon>
        <taxon>Euteleostomi</taxon>
        <taxon>Archelosauria</taxon>
        <taxon>Archosauria</taxon>
        <taxon>Dinosauria</taxon>
        <taxon>Saurischia</taxon>
        <taxon>Theropoda</taxon>
        <taxon>Coelurosauria</taxon>
        <taxon>Aves</taxon>
        <taxon>Neognathae</taxon>
        <taxon>Galloanserae</taxon>
        <taxon>Galliformes</taxon>
        <taxon>Phasianidae</taxon>
        <taxon>Phasianinae</taxon>
        <taxon>Gallus</taxon>
    </lineage>
</organism>
<sequence length="1327" mass="149426">MPRQLLSGTVLLGAAFLLAGSTSGSKLKVPVLSVNGRQHVVQAGQTLNLTCRGEMLHSWSLPEALSKDSKRLNVTKYACGRNGTQFCSTLTLSRTQANDTGRYSCRYPTSPVKKKRESIVYVFINDTSNPFVEMHSDIPKIIHMTVGKEMIIPCRVTAPNIAVTLKKIPRETLIPDGKTIIWDNMRGFRIPEATYRFIGLLSCETTIGGHKYSTKYLTHRETNTIFDIKLSTPRLVKLLKGDSLAINCTVKAAWNTRVQMTWTYPGEAMKRGSVTQRIDQKNREANVFYSILVIDKVRDIDKGQYACHVKSGPSNKLVNTTVIVYDKRFINLKRRRKTMLEAVAGRKSYRLPMKVKAFPSPEVTWLKDGLPAAEKCARYMVKNYSLIIKDVAEEDAGNYTIILSLRQWNLSKNLTVTLKVNVKPQIYENAVSSFPDPNLYLLSSKQVLTCTVYGIPPPKITWMWYPCRQNHSKTRRGFCSRTDGSFNLKTGSNIGNRIQSIIERTAIIEGKNKTASTLVVAEAKSSGIYSCVASNKVGKAERNVSFLVTDVPSGFHISLEKVPIEGENLVLSCSANKFMYKDISWILPRTVTNQTKARKALNKEYSITLTLTIRNVSLAHSGTYTCRARNIFTGKEVLQKKDVSIRAQEAPALLRQLMDQTVNTSNSAMLECQVHGIPEPQITWFKNHEEIQQESGIILGPGSRMLFIERVKEEDEGLYQCIATNLKGSVESTAYVTVQGTVERSNLELITLTCTCVAATLFWLLLTLFIRKLKRPYFSETKTNHYLSIIMDPDEVPLDEQCECLPYDASKWEIARERLKLGKSLGHGAFGKVVQASAFGIKKSPTCRIVAVKMLKEGATASEYKALMTELKILIHIGHHLNIVNLLGACTKNGGPLMVIVEYCKYGNLSNYLKSKRNFFSPTKDPSLQGELMKDKKGIEPVEGKKQRLASVTSSESFASSGFQEDKSLSDAEEDEEDAAELYKLPLTMEDLISYSFQVARGMEFLSSRKCIHRDLAARNILLSENNVVKICDFGLARDIYKNPDYVRKGDARLPLKWMAPESIFDKIYNTKSDVWSYGVLLWEIFSLGASPYPGVQIDEDFCSKLKEGTRMRAPEQATEEIYQIMLDCWRSNPNERPWFSELVKRLGDLLQASVQQEGKDYIPLDTIFTAESGFPPASDPLCNEKFPVPSPNCRSTERARYINTFKIKPPQRIKTFEELPIKEKLVFNDYQADSGMVLASEELKRFTWTGSKQKWTLFGMKGVSRSKESGLSGITKPRSFCSFSCDQLSESKRRYTYGNTVLEKMKACHSPPPDYSSVVHYSQPSI</sequence>
<keyword id="KW-0025">Alternative splicing</keyword>
<keyword id="KW-0037">Angiogenesis</keyword>
<keyword id="KW-0067">ATP-binding</keyword>
<keyword id="KW-1003">Cell membrane</keyword>
<keyword id="KW-0145">Chemotaxis</keyword>
<keyword id="KW-0217">Developmental protein</keyword>
<keyword id="KW-0221">Differentiation</keyword>
<keyword id="KW-1015">Disulfide bond</keyword>
<keyword id="KW-0967">Endosome</keyword>
<keyword id="KW-0325">Glycoprotein</keyword>
<keyword id="KW-0393">Immunoglobulin domain</keyword>
<keyword id="KW-0418">Kinase</keyword>
<keyword id="KW-0472">Membrane</keyword>
<keyword id="KW-0547">Nucleotide-binding</keyword>
<keyword id="KW-0597">Phosphoprotein</keyword>
<keyword id="KW-0675">Receptor</keyword>
<keyword id="KW-1185">Reference proteome</keyword>
<keyword id="KW-0677">Repeat</keyword>
<keyword id="KW-0964">Secreted</keyword>
<keyword id="KW-0732">Signal</keyword>
<keyword id="KW-0808">Transferase</keyword>
<keyword id="KW-0812">Transmembrane</keyword>
<keyword id="KW-1133">Transmembrane helix</keyword>
<keyword id="KW-0829">Tyrosine-protein kinase</keyword>
<reference key="1">
    <citation type="journal article" date="2002" name="Biochem. Biophys. Res. Commun.">
        <title>Soluble Flt-1 (soluble VEGFR-1), a potent natural antiangiogenic molecule in mammals, is phylogenetically conserved in avians.</title>
        <authorList>
            <person name="Yamaguchi S."/>
            <person name="Iwata K."/>
            <person name="Shibuya M."/>
        </authorList>
    </citation>
    <scope>NUCLEOTIDE SEQUENCE [MRNA] (ISOFORMS 1 AND 2)</scope>
</reference>
<protein>
    <recommendedName>
        <fullName>Vascular endothelial growth factor receptor 1</fullName>
        <shortName>VEGFR-1</shortName>
        <ecNumber>2.7.10.1</ecNumber>
    </recommendedName>
</protein>